<protein>
    <recommendedName>
        <fullName evidence="1">Queuine tRNA-ribosyltransferase</fullName>
        <ecNumber evidence="1">2.4.2.29</ecNumber>
    </recommendedName>
    <alternativeName>
        <fullName evidence="1">Guanine insertion enzyme</fullName>
    </alternativeName>
    <alternativeName>
        <fullName evidence="1">tRNA-guanine transglycosylase</fullName>
    </alternativeName>
</protein>
<organism>
    <name type="scientific">Ruegeria pomeroyi (strain ATCC 700808 / DSM 15171 / DSS-3)</name>
    <name type="common">Silicibacter pomeroyi</name>
    <dbReference type="NCBI Taxonomy" id="246200"/>
    <lineage>
        <taxon>Bacteria</taxon>
        <taxon>Pseudomonadati</taxon>
        <taxon>Pseudomonadota</taxon>
        <taxon>Alphaproteobacteria</taxon>
        <taxon>Rhodobacterales</taxon>
        <taxon>Roseobacteraceae</taxon>
        <taxon>Ruegeria</taxon>
    </lineage>
</organism>
<sequence>MSERFSFDLHASDGKARTGVIHTPRGGVRTPAFMPVGTAATVKAMMPESVRATGADILLGNTYHLMLRPTAERIDRLGGLHRFMNWDRPILTDSGGFQVMSLAGLRKLTEKGVTFKSHIDGSKHELTPERSMEIQRLLGSDIVMCFDECPALPADRDRIAESMRLSMRWAERSREAFGDRPGHALFGIMQGGLEQDLREESAQALRSVGFDGYAVGGLAVGEGQAAMFDCLDYAPGFLPEDKPRYLMGVGKPDDIVGAVKRGIDMMDCVLPSRSGRTGQVFTRHGVLNIKNARHMDDPRPLDEACTCPACRNYSRAYLHHVFRSQEIISSMLLTWHNLHYFQEIMQGMREAIAGGTFEAWEAAFHAGRAQGDIEPL</sequence>
<evidence type="ECO:0000255" key="1">
    <source>
        <dbReference type="HAMAP-Rule" id="MF_00168"/>
    </source>
</evidence>
<proteinExistence type="inferred from homology"/>
<feature type="chain" id="PRO_0000135521" description="Queuine tRNA-ribosyltransferase">
    <location>
        <begin position="1"/>
        <end position="376"/>
    </location>
</feature>
<feature type="region of interest" description="RNA binding" evidence="1">
    <location>
        <begin position="248"/>
        <end position="254"/>
    </location>
</feature>
<feature type="active site" description="Proton acceptor" evidence="1">
    <location>
        <position position="93"/>
    </location>
</feature>
<feature type="active site" description="Nucleophile" evidence="1">
    <location>
        <position position="267"/>
    </location>
</feature>
<feature type="binding site" evidence="1">
    <location>
        <begin position="93"/>
        <end position="97"/>
    </location>
    <ligand>
        <name>substrate</name>
    </ligand>
</feature>
<feature type="binding site" evidence="1">
    <location>
        <position position="147"/>
    </location>
    <ligand>
        <name>substrate</name>
    </ligand>
</feature>
<feature type="binding site" evidence="1">
    <location>
        <position position="190"/>
    </location>
    <ligand>
        <name>substrate</name>
    </ligand>
</feature>
<feature type="binding site" evidence="1">
    <location>
        <position position="217"/>
    </location>
    <ligand>
        <name>substrate</name>
    </ligand>
</feature>
<feature type="binding site" evidence="1">
    <location>
        <position position="305"/>
    </location>
    <ligand>
        <name>Zn(2+)</name>
        <dbReference type="ChEBI" id="CHEBI:29105"/>
    </ligand>
</feature>
<feature type="binding site" evidence="1">
    <location>
        <position position="307"/>
    </location>
    <ligand>
        <name>Zn(2+)</name>
        <dbReference type="ChEBI" id="CHEBI:29105"/>
    </ligand>
</feature>
<feature type="binding site" evidence="1">
    <location>
        <position position="310"/>
    </location>
    <ligand>
        <name>Zn(2+)</name>
        <dbReference type="ChEBI" id="CHEBI:29105"/>
    </ligand>
</feature>
<feature type="binding site" evidence="1">
    <location>
        <position position="336"/>
    </location>
    <ligand>
        <name>Zn(2+)</name>
        <dbReference type="ChEBI" id="CHEBI:29105"/>
    </ligand>
</feature>
<dbReference type="EC" id="2.4.2.29" evidence="1"/>
<dbReference type="EMBL" id="CP000031">
    <property type="protein sequence ID" value="AAV95861.1"/>
    <property type="molecule type" value="Genomic_DNA"/>
</dbReference>
<dbReference type="RefSeq" id="WP_011048318.1">
    <property type="nucleotide sequence ID" value="NC_003911.12"/>
</dbReference>
<dbReference type="SMR" id="Q5LQ80"/>
<dbReference type="STRING" id="246200.SPO2616"/>
<dbReference type="PaxDb" id="246200-SPO2616"/>
<dbReference type="KEGG" id="sil:SPO2616"/>
<dbReference type="eggNOG" id="COG0343">
    <property type="taxonomic scope" value="Bacteria"/>
</dbReference>
<dbReference type="HOGENOM" id="CLU_022060_0_1_5"/>
<dbReference type="OrthoDB" id="9805417at2"/>
<dbReference type="UniPathway" id="UPA00392"/>
<dbReference type="Proteomes" id="UP000001023">
    <property type="component" value="Chromosome"/>
</dbReference>
<dbReference type="GO" id="GO:0005829">
    <property type="term" value="C:cytosol"/>
    <property type="evidence" value="ECO:0007669"/>
    <property type="project" value="TreeGrafter"/>
</dbReference>
<dbReference type="GO" id="GO:0046872">
    <property type="term" value="F:metal ion binding"/>
    <property type="evidence" value="ECO:0007669"/>
    <property type="project" value="UniProtKB-KW"/>
</dbReference>
<dbReference type="GO" id="GO:0008479">
    <property type="term" value="F:tRNA-guanosine(34) queuine transglycosylase activity"/>
    <property type="evidence" value="ECO:0007669"/>
    <property type="project" value="UniProtKB-UniRule"/>
</dbReference>
<dbReference type="GO" id="GO:0008616">
    <property type="term" value="P:queuosine biosynthetic process"/>
    <property type="evidence" value="ECO:0007669"/>
    <property type="project" value="UniProtKB-UniRule"/>
</dbReference>
<dbReference type="GO" id="GO:0002099">
    <property type="term" value="P:tRNA wobble guanine modification"/>
    <property type="evidence" value="ECO:0007669"/>
    <property type="project" value="TreeGrafter"/>
</dbReference>
<dbReference type="GO" id="GO:0101030">
    <property type="term" value="P:tRNA-guanine transglycosylation"/>
    <property type="evidence" value="ECO:0007669"/>
    <property type="project" value="InterPro"/>
</dbReference>
<dbReference type="FunFam" id="3.20.20.105:FF:000001">
    <property type="entry name" value="Queuine tRNA-ribosyltransferase"/>
    <property type="match status" value="1"/>
</dbReference>
<dbReference type="Gene3D" id="3.20.20.105">
    <property type="entry name" value="Queuine tRNA-ribosyltransferase-like"/>
    <property type="match status" value="1"/>
</dbReference>
<dbReference type="HAMAP" id="MF_00168">
    <property type="entry name" value="Q_tRNA_Tgt"/>
    <property type="match status" value="1"/>
</dbReference>
<dbReference type="InterPro" id="IPR050076">
    <property type="entry name" value="ArchSynthase1/Queuine_TRR"/>
</dbReference>
<dbReference type="InterPro" id="IPR004803">
    <property type="entry name" value="TGT"/>
</dbReference>
<dbReference type="InterPro" id="IPR036511">
    <property type="entry name" value="TGT-like_sf"/>
</dbReference>
<dbReference type="InterPro" id="IPR002616">
    <property type="entry name" value="tRNA_ribo_trans-like"/>
</dbReference>
<dbReference type="NCBIfam" id="TIGR00430">
    <property type="entry name" value="Q_tRNA_tgt"/>
    <property type="match status" value="1"/>
</dbReference>
<dbReference type="NCBIfam" id="TIGR00449">
    <property type="entry name" value="tgt_general"/>
    <property type="match status" value="1"/>
</dbReference>
<dbReference type="PANTHER" id="PTHR46499">
    <property type="entry name" value="QUEUINE TRNA-RIBOSYLTRANSFERASE"/>
    <property type="match status" value="1"/>
</dbReference>
<dbReference type="PANTHER" id="PTHR46499:SF1">
    <property type="entry name" value="QUEUINE TRNA-RIBOSYLTRANSFERASE"/>
    <property type="match status" value="1"/>
</dbReference>
<dbReference type="Pfam" id="PF01702">
    <property type="entry name" value="TGT"/>
    <property type="match status" value="1"/>
</dbReference>
<dbReference type="SUPFAM" id="SSF51713">
    <property type="entry name" value="tRNA-guanine transglycosylase"/>
    <property type="match status" value="1"/>
</dbReference>
<gene>
    <name evidence="1" type="primary">tgt</name>
    <name type="ordered locus">SPO2616</name>
</gene>
<accession>Q5LQ80</accession>
<reference key="1">
    <citation type="journal article" date="2004" name="Nature">
        <title>Genome sequence of Silicibacter pomeroyi reveals adaptations to the marine environment.</title>
        <authorList>
            <person name="Moran M.A."/>
            <person name="Buchan A."/>
            <person name="Gonzalez J.M."/>
            <person name="Heidelberg J.F."/>
            <person name="Whitman W.B."/>
            <person name="Kiene R.P."/>
            <person name="Henriksen J.R."/>
            <person name="King G.M."/>
            <person name="Belas R."/>
            <person name="Fuqua C."/>
            <person name="Brinkac L.M."/>
            <person name="Lewis M."/>
            <person name="Johri S."/>
            <person name="Weaver B."/>
            <person name="Pai G."/>
            <person name="Eisen J.A."/>
            <person name="Rahe E."/>
            <person name="Sheldon W.M."/>
            <person name="Ye W."/>
            <person name="Miller T.R."/>
            <person name="Carlton J."/>
            <person name="Rasko D.A."/>
            <person name="Paulsen I.T."/>
            <person name="Ren Q."/>
            <person name="Daugherty S.C."/>
            <person name="DeBoy R.T."/>
            <person name="Dodson R.J."/>
            <person name="Durkin A.S."/>
            <person name="Madupu R."/>
            <person name="Nelson W.C."/>
            <person name="Sullivan S.A."/>
            <person name="Rosovitz M.J."/>
            <person name="Haft D.H."/>
            <person name="Selengut J."/>
            <person name="Ward N."/>
        </authorList>
    </citation>
    <scope>NUCLEOTIDE SEQUENCE [LARGE SCALE GENOMIC DNA]</scope>
    <source>
        <strain>ATCC 700808 / DSM 15171 / DSS-3</strain>
    </source>
</reference>
<reference key="2">
    <citation type="journal article" date="2014" name="Stand. Genomic Sci.">
        <title>An updated genome annotation for the model marine bacterium Ruegeria pomeroyi DSS-3.</title>
        <authorList>
            <person name="Rivers A.R."/>
            <person name="Smith C.B."/>
            <person name="Moran M.A."/>
        </authorList>
    </citation>
    <scope>GENOME REANNOTATION</scope>
    <source>
        <strain>ATCC 700808 / DSM 15171 / DSS-3</strain>
    </source>
</reference>
<name>TGT_RUEPO</name>
<comment type="function">
    <text evidence="1">Catalyzes the base-exchange of a guanine (G) residue with the queuine precursor 7-aminomethyl-7-deazaguanine (PreQ1) at position 34 (anticodon wobble position) in tRNAs with GU(N) anticodons (tRNA-Asp, -Asn, -His and -Tyr). Catalysis occurs through a double-displacement mechanism. The nucleophile active site attacks the C1' of nucleotide 34 to detach the guanine base from the RNA, forming a covalent enzyme-RNA intermediate. The proton acceptor active site deprotonates the incoming PreQ1, allowing a nucleophilic attack on the C1' of the ribose to form the product. After dissociation, two additional enzymatic reactions on the tRNA convert PreQ1 to queuine (Q), resulting in the hypermodified nucleoside queuosine (7-(((4,5-cis-dihydroxy-2-cyclopenten-1-yl)amino)methyl)-7-deazaguanosine).</text>
</comment>
<comment type="catalytic activity">
    <reaction evidence="1">
        <text>7-aminomethyl-7-carbaguanine + guanosine(34) in tRNA = 7-aminomethyl-7-carbaguanosine(34) in tRNA + guanine</text>
        <dbReference type="Rhea" id="RHEA:24104"/>
        <dbReference type="Rhea" id="RHEA-COMP:10341"/>
        <dbReference type="Rhea" id="RHEA-COMP:10342"/>
        <dbReference type="ChEBI" id="CHEBI:16235"/>
        <dbReference type="ChEBI" id="CHEBI:58703"/>
        <dbReference type="ChEBI" id="CHEBI:74269"/>
        <dbReference type="ChEBI" id="CHEBI:82833"/>
        <dbReference type="EC" id="2.4.2.29"/>
    </reaction>
</comment>
<comment type="cofactor">
    <cofactor evidence="1">
        <name>Zn(2+)</name>
        <dbReference type="ChEBI" id="CHEBI:29105"/>
    </cofactor>
    <text evidence="1">Binds 1 zinc ion per subunit.</text>
</comment>
<comment type="pathway">
    <text evidence="1">tRNA modification; tRNA-queuosine biosynthesis.</text>
</comment>
<comment type="subunit">
    <text evidence="1">Homodimer. Within each dimer, one monomer is responsible for RNA recognition and catalysis, while the other monomer binds to the replacement base PreQ1.</text>
</comment>
<comment type="similarity">
    <text evidence="1">Belongs to the queuine tRNA-ribosyltransferase family.</text>
</comment>
<keyword id="KW-0328">Glycosyltransferase</keyword>
<keyword id="KW-0479">Metal-binding</keyword>
<keyword id="KW-0671">Queuosine biosynthesis</keyword>
<keyword id="KW-1185">Reference proteome</keyword>
<keyword id="KW-0808">Transferase</keyword>
<keyword id="KW-0819">tRNA processing</keyword>
<keyword id="KW-0862">Zinc</keyword>